<feature type="chain" id="PRO_0000176615" description="Large ribosomal subunit protein bL9">
    <location>
        <begin position="1"/>
        <end position="149"/>
    </location>
</feature>
<proteinExistence type="inferred from homology"/>
<organism>
    <name type="scientific">Aquifex aeolicus (strain VF5)</name>
    <dbReference type="NCBI Taxonomy" id="224324"/>
    <lineage>
        <taxon>Bacteria</taxon>
        <taxon>Pseudomonadati</taxon>
        <taxon>Aquificota</taxon>
        <taxon>Aquificia</taxon>
        <taxon>Aquificales</taxon>
        <taxon>Aquificaceae</taxon>
        <taxon>Aquifex</taxon>
    </lineage>
</organism>
<reference key="1">
    <citation type="journal article" date="1998" name="Nature">
        <title>The complete genome of the hyperthermophilic bacterium Aquifex aeolicus.</title>
        <authorList>
            <person name="Deckert G."/>
            <person name="Warren P.V."/>
            <person name="Gaasterland T."/>
            <person name="Young W.G."/>
            <person name="Lenox A.L."/>
            <person name="Graham D.E."/>
            <person name="Overbeek R."/>
            <person name="Snead M.A."/>
            <person name="Keller M."/>
            <person name="Aujay M."/>
            <person name="Huber R."/>
            <person name="Feldman R.A."/>
            <person name="Short J.M."/>
            <person name="Olsen G.J."/>
            <person name="Swanson R.V."/>
        </authorList>
    </citation>
    <scope>NUCLEOTIDE SEQUENCE [LARGE SCALE GENOMIC DNA]</scope>
    <source>
        <strain>VF5</strain>
    </source>
</reference>
<evidence type="ECO:0000255" key="1">
    <source>
        <dbReference type="HAMAP-Rule" id="MF_00503"/>
    </source>
</evidence>
<evidence type="ECO:0000305" key="2"/>
<name>RL9_AQUAE</name>
<accession>O67830</accession>
<gene>
    <name evidence="1" type="primary">rplI</name>
    <name type="ordered locus">aq_2042</name>
</gene>
<dbReference type="EMBL" id="AE000657">
    <property type="protein sequence ID" value="AAC07793.1"/>
    <property type="molecule type" value="Genomic_DNA"/>
</dbReference>
<dbReference type="PIR" id="B70475">
    <property type="entry name" value="B70475"/>
</dbReference>
<dbReference type="RefSeq" id="NP_214399.1">
    <property type="nucleotide sequence ID" value="NC_000918.1"/>
</dbReference>
<dbReference type="RefSeq" id="WP_010881335.1">
    <property type="nucleotide sequence ID" value="NC_000918.1"/>
</dbReference>
<dbReference type="SMR" id="O67830"/>
<dbReference type="FunCoup" id="O67830">
    <property type="interactions" value="559"/>
</dbReference>
<dbReference type="STRING" id="224324.aq_2042"/>
<dbReference type="EnsemblBacteria" id="AAC07793">
    <property type="protein sequence ID" value="AAC07793"/>
    <property type="gene ID" value="aq_2042"/>
</dbReference>
<dbReference type="KEGG" id="aae:aq_2042"/>
<dbReference type="PATRIC" id="fig|224324.8.peg.1576"/>
<dbReference type="eggNOG" id="COG0359">
    <property type="taxonomic scope" value="Bacteria"/>
</dbReference>
<dbReference type="HOGENOM" id="CLU_078938_3_0_0"/>
<dbReference type="InParanoid" id="O67830"/>
<dbReference type="OrthoDB" id="9788336at2"/>
<dbReference type="Proteomes" id="UP000000798">
    <property type="component" value="Chromosome"/>
</dbReference>
<dbReference type="GO" id="GO:0022625">
    <property type="term" value="C:cytosolic large ribosomal subunit"/>
    <property type="evidence" value="ECO:0000318"/>
    <property type="project" value="GO_Central"/>
</dbReference>
<dbReference type="GO" id="GO:0019843">
    <property type="term" value="F:rRNA binding"/>
    <property type="evidence" value="ECO:0007669"/>
    <property type="project" value="UniProtKB-UniRule"/>
</dbReference>
<dbReference type="GO" id="GO:0003735">
    <property type="term" value="F:structural constituent of ribosome"/>
    <property type="evidence" value="ECO:0007669"/>
    <property type="project" value="InterPro"/>
</dbReference>
<dbReference type="GO" id="GO:0006412">
    <property type="term" value="P:translation"/>
    <property type="evidence" value="ECO:0007669"/>
    <property type="project" value="UniProtKB-UniRule"/>
</dbReference>
<dbReference type="FunFam" id="3.10.430.100:FF:000006">
    <property type="entry name" value="50S ribosomal protein L9"/>
    <property type="match status" value="1"/>
</dbReference>
<dbReference type="FunFam" id="3.40.5.10:FF:000002">
    <property type="entry name" value="50S ribosomal protein L9"/>
    <property type="match status" value="1"/>
</dbReference>
<dbReference type="Gene3D" id="3.10.430.100">
    <property type="entry name" value="Ribosomal protein L9, C-terminal domain"/>
    <property type="match status" value="1"/>
</dbReference>
<dbReference type="Gene3D" id="3.40.5.10">
    <property type="entry name" value="Ribosomal protein L9, N-terminal domain"/>
    <property type="match status" value="1"/>
</dbReference>
<dbReference type="HAMAP" id="MF_00503">
    <property type="entry name" value="Ribosomal_bL9"/>
    <property type="match status" value="1"/>
</dbReference>
<dbReference type="InterPro" id="IPR000244">
    <property type="entry name" value="Ribosomal_bL9"/>
</dbReference>
<dbReference type="InterPro" id="IPR009027">
    <property type="entry name" value="Ribosomal_bL9/RNase_H1_N"/>
</dbReference>
<dbReference type="InterPro" id="IPR020594">
    <property type="entry name" value="Ribosomal_bL9_bac/chp"/>
</dbReference>
<dbReference type="InterPro" id="IPR020069">
    <property type="entry name" value="Ribosomal_bL9_C"/>
</dbReference>
<dbReference type="InterPro" id="IPR036791">
    <property type="entry name" value="Ribosomal_bL9_C_sf"/>
</dbReference>
<dbReference type="InterPro" id="IPR020070">
    <property type="entry name" value="Ribosomal_bL9_N"/>
</dbReference>
<dbReference type="InterPro" id="IPR036935">
    <property type="entry name" value="Ribosomal_bL9_N_sf"/>
</dbReference>
<dbReference type="NCBIfam" id="TIGR00158">
    <property type="entry name" value="L9"/>
    <property type="match status" value="1"/>
</dbReference>
<dbReference type="PANTHER" id="PTHR21368">
    <property type="entry name" value="50S RIBOSOMAL PROTEIN L9"/>
    <property type="match status" value="1"/>
</dbReference>
<dbReference type="Pfam" id="PF03948">
    <property type="entry name" value="Ribosomal_L9_C"/>
    <property type="match status" value="1"/>
</dbReference>
<dbReference type="Pfam" id="PF01281">
    <property type="entry name" value="Ribosomal_L9_N"/>
    <property type="match status" value="1"/>
</dbReference>
<dbReference type="SUPFAM" id="SSF55658">
    <property type="entry name" value="L9 N-domain-like"/>
    <property type="match status" value="1"/>
</dbReference>
<dbReference type="SUPFAM" id="SSF55653">
    <property type="entry name" value="Ribosomal protein L9 C-domain"/>
    <property type="match status" value="1"/>
</dbReference>
<dbReference type="PROSITE" id="PS00651">
    <property type="entry name" value="RIBOSOMAL_L9"/>
    <property type="match status" value="1"/>
</dbReference>
<protein>
    <recommendedName>
        <fullName evidence="1">Large ribosomal subunit protein bL9</fullName>
    </recommendedName>
    <alternativeName>
        <fullName evidence="2">50S ribosomal protein L9</fullName>
    </alternativeName>
</protein>
<keyword id="KW-1185">Reference proteome</keyword>
<keyword id="KW-0687">Ribonucleoprotein</keyword>
<keyword id="KW-0689">Ribosomal protein</keyword>
<keyword id="KW-0694">RNA-binding</keyword>
<keyword id="KW-0699">rRNA-binding</keyword>
<comment type="function">
    <text evidence="1">Binds to the 23S rRNA.</text>
</comment>
<comment type="similarity">
    <text evidence="1">Belongs to the bacterial ribosomal protein bL9 family.</text>
</comment>
<sequence>MKVVLVKDVEGLGFFGDVVNVKDGYAMNYLIPRGLALPATEGNIKHIQTILAQKERKLLREKKKAEELAKKLEGMVIGIKKPAGEGGKLFGSVTPADIVNALKEKGIEIERKNVVFYHPIKEVGVFPVKIRLHKDVEVDIKVDVKPEEK</sequence>